<name>GSTB_ECOLI</name>
<accession>P0ACA7</accession>
<accession>P75805</accession>
<accession>Q9R7R4</accession>
<reference key="1">
    <citation type="journal article" date="1996" name="DNA Res.">
        <title>A 718-kb DNA sequence of the Escherichia coli K-12 genome corresponding to the 12.7-28.0 min region on the linkage map.</title>
        <authorList>
            <person name="Oshima T."/>
            <person name="Aiba H."/>
            <person name="Baba T."/>
            <person name="Fujita K."/>
            <person name="Hayashi K."/>
            <person name="Honjo A."/>
            <person name="Ikemoto K."/>
            <person name="Inada T."/>
            <person name="Itoh T."/>
            <person name="Kajihara M."/>
            <person name="Kanai K."/>
            <person name="Kashimoto K."/>
            <person name="Kimura S."/>
            <person name="Kitagawa M."/>
            <person name="Makino K."/>
            <person name="Masuda S."/>
            <person name="Miki T."/>
            <person name="Mizobuchi K."/>
            <person name="Mori H."/>
            <person name="Motomura K."/>
            <person name="Nakamura Y."/>
            <person name="Nashimoto H."/>
            <person name="Nishio Y."/>
            <person name="Saito N."/>
            <person name="Sampei G."/>
            <person name="Seki Y."/>
            <person name="Tagami H."/>
            <person name="Takemoto K."/>
            <person name="Wada C."/>
            <person name="Yamamoto Y."/>
            <person name="Yano M."/>
            <person name="Horiuchi T."/>
        </authorList>
    </citation>
    <scope>NUCLEOTIDE SEQUENCE [LARGE SCALE GENOMIC DNA]</scope>
    <source>
        <strain>K12 / W3110 / ATCC 27325 / DSM 5911</strain>
    </source>
</reference>
<reference key="2">
    <citation type="journal article" date="1997" name="Science">
        <title>The complete genome sequence of Escherichia coli K-12.</title>
        <authorList>
            <person name="Blattner F.R."/>
            <person name="Plunkett G. III"/>
            <person name="Bloch C.A."/>
            <person name="Perna N.T."/>
            <person name="Burland V."/>
            <person name="Riley M."/>
            <person name="Collado-Vides J."/>
            <person name="Glasner J.D."/>
            <person name="Rode C.K."/>
            <person name="Mayhew G.F."/>
            <person name="Gregor J."/>
            <person name="Davis N.W."/>
            <person name="Kirkpatrick H.A."/>
            <person name="Goeden M.A."/>
            <person name="Rose D.J."/>
            <person name="Mau B."/>
            <person name="Shao Y."/>
        </authorList>
    </citation>
    <scope>NUCLEOTIDE SEQUENCE [LARGE SCALE GENOMIC DNA]</scope>
    <source>
        <strain>K12 / MG1655 / ATCC 47076</strain>
    </source>
</reference>
<reference key="3">
    <citation type="journal article" date="2006" name="Mol. Syst. Biol.">
        <title>Highly accurate genome sequences of Escherichia coli K-12 strains MG1655 and W3110.</title>
        <authorList>
            <person name="Hayashi K."/>
            <person name="Morooka N."/>
            <person name="Yamamoto Y."/>
            <person name="Fujita K."/>
            <person name="Isono K."/>
            <person name="Choi S."/>
            <person name="Ohtsubo E."/>
            <person name="Baba T."/>
            <person name="Wanner B.L."/>
            <person name="Mori H."/>
            <person name="Horiuchi T."/>
        </authorList>
    </citation>
    <scope>NUCLEOTIDE SEQUENCE [LARGE SCALE GENOMIC DNA]</scope>
    <source>
        <strain>K12 / W3110 / ATCC 27325 / DSM 5911</strain>
    </source>
</reference>
<reference key="4">
    <citation type="journal article" date="2010" name="Proc. Natl. Acad. Sci. U.S.A.">
        <title>Recruitment of genes and enzymes conferring resistance to the nonnatural toxin bromoacetate.</title>
        <authorList>
            <person name="Desai K.K."/>
            <person name="Miller B.G."/>
        </authorList>
    </citation>
    <scope>FUNCTION</scope>
    <scope>CATALYTIC ACTIVITY</scope>
    <scope>BIOPHYSICOCHEMICAL PROPERTIES</scope>
    <scope>DISRUPTION PHENOTYPE</scope>
    <scope>GENE NAME</scope>
</reference>
<protein>
    <recommendedName>
        <fullName>Glutathione S-transferase GstB</fullName>
        <ecNumber>2.5.1.18</ecNumber>
    </recommendedName>
</protein>
<dbReference type="EC" id="2.5.1.18"/>
<dbReference type="EMBL" id="U00096">
    <property type="protein sequence ID" value="AAC73925.2"/>
    <property type="molecule type" value="Genomic_DNA"/>
</dbReference>
<dbReference type="EMBL" id="AP009048">
    <property type="protein sequence ID" value="BAA35541.1"/>
    <property type="molecule type" value="Genomic_DNA"/>
</dbReference>
<dbReference type="RefSeq" id="NP_415359.4">
    <property type="nucleotide sequence ID" value="NC_000913.3"/>
</dbReference>
<dbReference type="RefSeq" id="WP_001295292.1">
    <property type="nucleotide sequence ID" value="NZ_STEB01000019.1"/>
</dbReference>
<dbReference type="SMR" id="P0ACA7"/>
<dbReference type="BioGRID" id="4262824">
    <property type="interactions" value="15"/>
</dbReference>
<dbReference type="BioGRID" id="849843">
    <property type="interactions" value="2"/>
</dbReference>
<dbReference type="DIP" id="DIP-48220N"/>
<dbReference type="FunCoup" id="P0ACA7">
    <property type="interactions" value="166"/>
</dbReference>
<dbReference type="IntAct" id="P0ACA7">
    <property type="interactions" value="2"/>
</dbReference>
<dbReference type="STRING" id="511145.b0838"/>
<dbReference type="jPOST" id="P0ACA7"/>
<dbReference type="PaxDb" id="511145-b0838"/>
<dbReference type="EnsemblBacteria" id="AAC73925">
    <property type="protein sequence ID" value="AAC73925"/>
    <property type="gene ID" value="b0838"/>
</dbReference>
<dbReference type="GeneID" id="75204697"/>
<dbReference type="GeneID" id="945469"/>
<dbReference type="KEGG" id="ecj:JW0822"/>
<dbReference type="KEGG" id="eco:b0838"/>
<dbReference type="KEGG" id="ecoc:C3026_05245"/>
<dbReference type="PATRIC" id="fig|1411691.4.peg.1440"/>
<dbReference type="EchoBASE" id="EB3254"/>
<dbReference type="eggNOG" id="COG0625">
    <property type="taxonomic scope" value="Bacteria"/>
</dbReference>
<dbReference type="HOGENOM" id="CLU_011226_6_2_6"/>
<dbReference type="InParanoid" id="P0ACA7"/>
<dbReference type="OMA" id="QGEKWMD"/>
<dbReference type="OrthoDB" id="5958450at2"/>
<dbReference type="PhylomeDB" id="P0ACA7"/>
<dbReference type="BioCyc" id="EcoCyc:G6438-MONOMER"/>
<dbReference type="BioCyc" id="MetaCyc:G6438-MONOMER"/>
<dbReference type="SABIO-RK" id="P0ACA7"/>
<dbReference type="PRO" id="PR:P0ACA7"/>
<dbReference type="Proteomes" id="UP000000625">
    <property type="component" value="Chromosome"/>
</dbReference>
<dbReference type="GO" id="GO:0005737">
    <property type="term" value="C:cytoplasm"/>
    <property type="evidence" value="ECO:0000318"/>
    <property type="project" value="GO_Central"/>
</dbReference>
<dbReference type="GO" id="GO:0005829">
    <property type="term" value="C:cytosol"/>
    <property type="evidence" value="ECO:0000314"/>
    <property type="project" value="EcoCyc"/>
</dbReference>
<dbReference type="GO" id="GO:0030611">
    <property type="term" value="F:arsenate reductase activity"/>
    <property type="evidence" value="ECO:0000314"/>
    <property type="project" value="EcoCyc"/>
</dbReference>
<dbReference type="GO" id="GO:0043295">
    <property type="term" value="F:glutathione binding"/>
    <property type="evidence" value="ECO:0000318"/>
    <property type="project" value="GO_Central"/>
</dbReference>
<dbReference type="GO" id="GO:0004364">
    <property type="term" value="F:glutathione transferase activity"/>
    <property type="evidence" value="ECO:0000314"/>
    <property type="project" value="EcoCyc"/>
</dbReference>
<dbReference type="GO" id="GO:0042802">
    <property type="term" value="F:identical protein binding"/>
    <property type="evidence" value="ECO:0000353"/>
    <property type="project" value="IntAct"/>
</dbReference>
<dbReference type="FunFam" id="3.40.30.10:FF:000039">
    <property type="entry name" value="Glutathione S-transferase domain"/>
    <property type="match status" value="1"/>
</dbReference>
<dbReference type="FunFam" id="1.20.1050.10:FF:000013">
    <property type="entry name" value="Glutathione S-transferase GstB"/>
    <property type="match status" value="1"/>
</dbReference>
<dbReference type="Gene3D" id="1.20.1050.10">
    <property type="match status" value="1"/>
</dbReference>
<dbReference type="Gene3D" id="3.40.30.10">
    <property type="entry name" value="Glutaredoxin"/>
    <property type="match status" value="1"/>
</dbReference>
<dbReference type="InterPro" id="IPR010987">
    <property type="entry name" value="Glutathione-S-Trfase_C-like"/>
</dbReference>
<dbReference type="InterPro" id="IPR036282">
    <property type="entry name" value="Glutathione-S-Trfase_C_sf"/>
</dbReference>
<dbReference type="InterPro" id="IPR004045">
    <property type="entry name" value="Glutathione_S-Trfase_N"/>
</dbReference>
<dbReference type="InterPro" id="IPR004046">
    <property type="entry name" value="GST_C"/>
</dbReference>
<dbReference type="InterPro" id="IPR036249">
    <property type="entry name" value="Thioredoxin-like_sf"/>
</dbReference>
<dbReference type="PANTHER" id="PTHR44051:SF19">
    <property type="entry name" value="DISULFIDE-BOND OXIDOREDUCTASE YFCG"/>
    <property type="match status" value="1"/>
</dbReference>
<dbReference type="PANTHER" id="PTHR44051">
    <property type="entry name" value="GLUTATHIONE S-TRANSFERASE-RELATED"/>
    <property type="match status" value="1"/>
</dbReference>
<dbReference type="Pfam" id="PF00043">
    <property type="entry name" value="GST_C"/>
    <property type="match status" value="1"/>
</dbReference>
<dbReference type="Pfam" id="PF02798">
    <property type="entry name" value="GST_N"/>
    <property type="match status" value="1"/>
</dbReference>
<dbReference type="SFLD" id="SFLDG01150">
    <property type="entry name" value="Main.1:_Beta-like"/>
    <property type="match status" value="1"/>
</dbReference>
<dbReference type="SFLD" id="SFLDG00358">
    <property type="entry name" value="Main_(cytGST)"/>
    <property type="match status" value="1"/>
</dbReference>
<dbReference type="SUPFAM" id="SSF47616">
    <property type="entry name" value="GST C-terminal domain-like"/>
    <property type="match status" value="1"/>
</dbReference>
<dbReference type="SUPFAM" id="SSF52833">
    <property type="entry name" value="Thioredoxin-like"/>
    <property type="match status" value="1"/>
</dbReference>
<dbReference type="PROSITE" id="PS50405">
    <property type="entry name" value="GST_CTER"/>
    <property type="match status" value="1"/>
</dbReference>
<dbReference type="PROSITE" id="PS50404">
    <property type="entry name" value="GST_NTER"/>
    <property type="match status" value="1"/>
</dbReference>
<feature type="chain" id="PRO_0000186018" description="Glutathione S-transferase GstB">
    <location>
        <begin position="1"/>
        <end position="208"/>
    </location>
</feature>
<feature type="domain" description="GST N-terminal">
    <location>
        <begin position="1"/>
        <end position="83"/>
    </location>
</feature>
<feature type="domain" description="GST C-terminal">
    <location>
        <begin position="88"/>
        <end position="208"/>
    </location>
</feature>
<feature type="binding site" evidence="1">
    <location>
        <position position="12"/>
    </location>
    <ligand>
        <name>glutathione</name>
        <dbReference type="ChEBI" id="CHEBI:57925"/>
    </ligand>
</feature>
<feature type="binding site" evidence="1">
    <location>
        <position position="39"/>
    </location>
    <ligand>
        <name>glutathione</name>
        <dbReference type="ChEBI" id="CHEBI:57925"/>
    </ligand>
</feature>
<feature type="binding site" evidence="1">
    <location>
        <position position="53"/>
    </location>
    <ligand>
        <name>glutathione</name>
        <dbReference type="ChEBI" id="CHEBI:57925"/>
    </ligand>
</feature>
<feature type="binding site" evidence="1">
    <location>
        <begin position="67"/>
        <end position="68"/>
    </location>
    <ligand>
        <name>glutathione</name>
        <dbReference type="ChEBI" id="CHEBI:57925"/>
    </ligand>
</feature>
<organism>
    <name type="scientific">Escherichia coli (strain K12)</name>
    <dbReference type="NCBI Taxonomy" id="83333"/>
    <lineage>
        <taxon>Bacteria</taxon>
        <taxon>Pseudomonadati</taxon>
        <taxon>Pseudomonadota</taxon>
        <taxon>Gammaproteobacteria</taxon>
        <taxon>Enterobacterales</taxon>
        <taxon>Enterobacteriaceae</taxon>
        <taxon>Escherichia</taxon>
    </lineage>
</organism>
<gene>
    <name type="primary">gstB</name>
    <name type="synonym">yliJ</name>
    <name type="ordered locus">b0838</name>
    <name type="ordered locus">JW0822</name>
</gene>
<evidence type="ECO:0000250" key="1"/>
<evidence type="ECO:0000269" key="2">
    <source>
    </source>
</evidence>
<evidence type="ECO:0000305" key="3"/>
<proteinExistence type="evidence at protein level"/>
<keyword id="KW-1185">Reference proteome</keyword>
<keyword id="KW-0808">Transferase</keyword>
<comment type="function">
    <text evidence="2">Conjugation of reduced glutathione to a wide number of exogenous and endogenous hydrophobic electrophiles. Catalyzes the glutathione-dependent dehalogenation of bromoacetate.</text>
</comment>
<comment type="catalytic activity">
    <reaction evidence="2">
        <text>RX + glutathione = an S-substituted glutathione + a halide anion + H(+)</text>
        <dbReference type="Rhea" id="RHEA:16437"/>
        <dbReference type="ChEBI" id="CHEBI:15378"/>
        <dbReference type="ChEBI" id="CHEBI:16042"/>
        <dbReference type="ChEBI" id="CHEBI:17792"/>
        <dbReference type="ChEBI" id="CHEBI:57925"/>
        <dbReference type="ChEBI" id="CHEBI:90779"/>
        <dbReference type="EC" id="2.5.1.18"/>
    </reaction>
</comment>
<comment type="biophysicochemical properties">
    <kinetics>
        <KM evidence="2">5 mM for bromoacetate</KM>
    </kinetics>
</comment>
<comment type="interaction">
    <interactant intactId="EBI-1120568">
        <id>P0ACA7</id>
    </interactant>
    <interactant intactId="EBI-1120568">
        <id>P0ACA7</id>
        <label>gstB</label>
    </interactant>
    <organismsDiffer>false</organismsDiffer>
    <experiments>2</experiments>
</comment>
<comment type="interaction">
    <interactant intactId="EBI-1120568">
        <id>P0ACA7</id>
    </interactant>
    <interactant intactId="EBI-1126930">
        <id>P06987</id>
        <label>hisB</label>
    </interactant>
    <organismsDiffer>false</organismsDiffer>
    <experiments>4</experiments>
</comment>
<comment type="disruption phenotype">
    <text evidence="2">Mutants are hypersensitive to bromoacetate.</text>
</comment>
<comment type="similarity">
    <text evidence="3">Belongs to the GST superfamily.</text>
</comment>
<sequence length="208" mass="23713">MITLWGRNNSTNVKKVLLTLEELELPYEQILAGREFGINHDADFLAMNPNGLVPLLRDDESDLILWESNAIVRYLAAQYGQKRLWIDSPARRAEAEKWMDWANQTLSNAHRGILMGLVRTPPEERDQAAIDASCKECDALFALLDAELAKVKWFSGDEFGVGDIAIAPFIYNLFNVGLTWTPRPNLQRWYQQLTERPAVRKVVMIPVS</sequence>